<gene>
    <name evidence="1" type="primary">trpD</name>
    <name type="ordered locus">Smlt4310</name>
</gene>
<reference key="1">
    <citation type="journal article" date="2008" name="Genome Biol.">
        <title>The complete genome, comparative and functional analysis of Stenotrophomonas maltophilia reveals an organism heavily shielded by drug resistance determinants.</title>
        <authorList>
            <person name="Crossman L.C."/>
            <person name="Gould V.C."/>
            <person name="Dow J.M."/>
            <person name="Vernikos G.S."/>
            <person name="Okazaki A."/>
            <person name="Sebaihia M."/>
            <person name="Saunders D."/>
            <person name="Arrowsmith C."/>
            <person name="Carver T."/>
            <person name="Peters N."/>
            <person name="Adlem E."/>
            <person name="Kerhornou A."/>
            <person name="Lord A."/>
            <person name="Murphy L."/>
            <person name="Seeger K."/>
            <person name="Squares R."/>
            <person name="Rutter S."/>
            <person name="Quail M.A."/>
            <person name="Rajandream M.A."/>
            <person name="Harris D."/>
            <person name="Churcher C."/>
            <person name="Bentley S.D."/>
            <person name="Parkhill J."/>
            <person name="Thomson N.R."/>
            <person name="Avison M.B."/>
        </authorList>
    </citation>
    <scope>NUCLEOTIDE SEQUENCE [LARGE SCALE GENOMIC DNA]</scope>
    <source>
        <strain>K279a</strain>
    </source>
</reference>
<sequence>MSFSPQEALHRTIEHGEIFFDEMVDLMRQIMRGDVSPMMTAAILTGLRVKKETVDEIAAAATVMREFARPVPVADTSNLVDIVGTGGDGSHTFNISTCAMFVAAAAGARVAKHGNRSVSSKSGSADALEALGAVIELQPDQVAAAIDRTGIGFMFAPIHHPSMKVVAPVRREMGVRTIFNILGPLTNPASAPSVLMGVFHPDLVGIQARVLRELGTERAMVVWGRDNMDEISLGAGTLVGELRDGKVREYEIHPEDFGIAMSASRNLRVDGPEQSIQMLRAVLDNEPGPALDIVALNAGAALYVAGVASDIGDGLARARAAIANGSARQRLQQYVETTRALVA</sequence>
<name>TRPD_STRMK</name>
<proteinExistence type="inferred from homology"/>
<protein>
    <recommendedName>
        <fullName evidence="1">Anthranilate phosphoribosyltransferase</fullName>
        <ecNumber evidence="1">2.4.2.18</ecNumber>
    </recommendedName>
</protein>
<comment type="function">
    <text evidence="1">Catalyzes the transfer of the phosphoribosyl group of 5-phosphorylribose-1-pyrophosphate (PRPP) to anthranilate to yield N-(5'-phosphoribosyl)-anthranilate (PRA).</text>
</comment>
<comment type="catalytic activity">
    <reaction evidence="1">
        <text>N-(5-phospho-beta-D-ribosyl)anthranilate + diphosphate = 5-phospho-alpha-D-ribose 1-diphosphate + anthranilate</text>
        <dbReference type="Rhea" id="RHEA:11768"/>
        <dbReference type="ChEBI" id="CHEBI:16567"/>
        <dbReference type="ChEBI" id="CHEBI:18277"/>
        <dbReference type="ChEBI" id="CHEBI:33019"/>
        <dbReference type="ChEBI" id="CHEBI:58017"/>
        <dbReference type="EC" id="2.4.2.18"/>
    </reaction>
</comment>
<comment type="cofactor">
    <cofactor evidence="1">
        <name>Mg(2+)</name>
        <dbReference type="ChEBI" id="CHEBI:18420"/>
    </cofactor>
    <text evidence="1">Binds 2 magnesium ions per monomer.</text>
</comment>
<comment type="pathway">
    <text evidence="1">Amino-acid biosynthesis; L-tryptophan biosynthesis; L-tryptophan from chorismate: step 2/5.</text>
</comment>
<comment type="subunit">
    <text evidence="1">Homodimer.</text>
</comment>
<comment type="similarity">
    <text evidence="1">Belongs to the anthranilate phosphoribosyltransferase family.</text>
</comment>
<accession>B2FKL2</accession>
<keyword id="KW-0028">Amino-acid biosynthesis</keyword>
<keyword id="KW-0057">Aromatic amino acid biosynthesis</keyword>
<keyword id="KW-0328">Glycosyltransferase</keyword>
<keyword id="KW-0460">Magnesium</keyword>
<keyword id="KW-0479">Metal-binding</keyword>
<keyword id="KW-1185">Reference proteome</keyword>
<keyword id="KW-0808">Transferase</keyword>
<keyword id="KW-0822">Tryptophan biosynthesis</keyword>
<feature type="chain" id="PRO_1000099848" description="Anthranilate phosphoribosyltransferase">
    <location>
        <begin position="1"/>
        <end position="343"/>
    </location>
</feature>
<feature type="binding site" evidence="1">
    <location>
        <position position="84"/>
    </location>
    <ligand>
        <name>5-phospho-alpha-D-ribose 1-diphosphate</name>
        <dbReference type="ChEBI" id="CHEBI:58017"/>
    </ligand>
</feature>
<feature type="binding site" evidence="1">
    <location>
        <position position="84"/>
    </location>
    <ligand>
        <name>anthranilate</name>
        <dbReference type="ChEBI" id="CHEBI:16567"/>
        <label>1</label>
    </ligand>
</feature>
<feature type="binding site" evidence="1">
    <location>
        <begin position="87"/>
        <end position="88"/>
    </location>
    <ligand>
        <name>5-phospho-alpha-D-ribose 1-diphosphate</name>
        <dbReference type="ChEBI" id="CHEBI:58017"/>
    </ligand>
</feature>
<feature type="binding site" evidence="1">
    <location>
        <position position="92"/>
    </location>
    <ligand>
        <name>5-phospho-alpha-D-ribose 1-diphosphate</name>
        <dbReference type="ChEBI" id="CHEBI:58017"/>
    </ligand>
</feature>
<feature type="binding site" evidence="1">
    <location>
        <begin position="94"/>
        <end position="97"/>
    </location>
    <ligand>
        <name>5-phospho-alpha-D-ribose 1-diphosphate</name>
        <dbReference type="ChEBI" id="CHEBI:58017"/>
    </ligand>
</feature>
<feature type="binding site" evidence="1">
    <location>
        <position position="96"/>
    </location>
    <ligand>
        <name>Mg(2+)</name>
        <dbReference type="ChEBI" id="CHEBI:18420"/>
        <label>1</label>
    </ligand>
</feature>
<feature type="binding site" evidence="1">
    <location>
        <begin position="112"/>
        <end position="120"/>
    </location>
    <ligand>
        <name>5-phospho-alpha-D-ribose 1-diphosphate</name>
        <dbReference type="ChEBI" id="CHEBI:58017"/>
    </ligand>
</feature>
<feature type="binding site" evidence="1">
    <location>
        <position position="115"/>
    </location>
    <ligand>
        <name>anthranilate</name>
        <dbReference type="ChEBI" id="CHEBI:16567"/>
        <label>1</label>
    </ligand>
</feature>
<feature type="binding site" evidence="1">
    <location>
        <position position="124"/>
    </location>
    <ligand>
        <name>5-phospho-alpha-D-ribose 1-diphosphate</name>
        <dbReference type="ChEBI" id="CHEBI:58017"/>
    </ligand>
</feature>
<feature type="binding site" evidence="1">
    <location>
        <position position="170"/>
    </location>
    <ligand>
        <name>anthranilate</name>
        <dbReference type="ChEBI" id="CHEBI:16567"/>
        <label>2</label>
    </ligand>
</feature>
<feature type="binding site" evidence="1">
    <location>
        <position position="229"/>
    </location>
    <ligand>
        <name>Mg(2+)</name>
        <dbReference type="ChEBI" id="CHEBI:18420"/>
        <label>2</label>
    </ligand>
</feature>
<feature type="binding site" evidence="1">
    <location>
        <position position="230"/>
    </location>
    <ligand>
        <name>Mg(2+)</name>
        <dbReference type="ChEBI" id="CHEBI:18420"/>
        <label>1</label>
    </ligand>
</feature>
<feature type="binding site" evidence="1">
    <location>
        <position position="230"/>
    </location>
    <ligand>
        <name>Mg(2+)</name>
        <dbReference type="ChEBI" id="CHEBI:18420"/>
        <label>2</label>
    </ligand>
</feature>
<organism>
    <name type="scientific">Stenotrophomonas maltophilia (strain K279a)</name>
    <dbReference type="NCBI Taxonomy" id="522373"/>
    <lineage>
        <taxon>Bacteria</taxon>
        <taxon>Pseudomonadati</taxon>
        <taxon>Pseudomonadota</taxon>
        <taxon>Gammaproteobacteria</taxon>
        <taxon>Lysobacterales</taxon>
        <taxon>Lysobacteraceae</taxon>
        <taxon>Stenotrophomonas</taxon>
        <taxon>Stenotrophomonas maltophilia group</taxon>
    </lineage>
</organism>
<dbReference type="EC" id="2.4.2.18" evidence="1"/>
<dbReference type="EMBL" id="AM743169">
    <property type="protein sequence ID" value="CAQ47695.1"/>
    <property type="molecule type" value="Genomic_DNA"/>
</dbReference>
<dbReference type="RefSeq" id="WP_012481438.1">
    <property type="nucleotide sequence ID" value="NC_010943.1"/>
</dbReference>
<dbReference type="SMR" id="B2FKL2"/>
<dbReference type="EnsemblBacteria" id="CAQ47695">
    <property type="protein sequence ID" value="CAQ47695"/>
    <property type="gene ID" value="Smlt4310"/>
</dbReference>
<dbReference type="KEGG" id="sml:Smlt4310"/>
<dbReference type="PATRIC" id="fig|522373.3.peg.4079"/>
<dbReference type="eggNOG" id="COG0547">
    <property type="taxonomic scope" value="Bacteria"/>
</dbReference>
<dbReference type="HOGENOM" id="CLU_034315_2_1_6"/>
<dbReference type="UniPathway" id="UPA00035">
    <property type="reaction ID" value="UER00041"/>
</dbReference>
<dbReference type="Proteomes" id="UP000008840">
    <property type="component" value="Chromosome"/>
</dbReference>
<dbReference type="GO" id="GO:0005829">
    <property type="term" value="C:cytosol"/>
    <property type="evidence" value="ECO:0007669"/>
    <property type="project" value="TreeGrafter"/>
</dbReference>
<dbReference type="GO" id="GO:0004048">
    <property type="term" value="F:anthranilate phosphoribosyltransferase activity"/>
    <property type="evidence" value="ECO:0007669"/>
    <property type="project" value="UniProtKB-UniRule"/>
</dbReference>
<dbReference type="GO" id="GO:0000287">
    <property type="term" value="F:magnesium ion binding"/>
    <property type="evidence" value="ECO:0007669"/>
    <property type="project" value="UniProtKB-UniRule"/>
</dbReference>
<dbReference type="GO" id="GO:0000162">
    <property type="term" value="P:L-tryptophan biosynthetic process"/>
    <property type="evidence" value="ECO:0007669"/>
    <property type="project" value="UniProtKB-UniRule"/>
</dbReference>
<dbReference type="FunFam" id="1.20.970.10:FF:000006">
    <property type="entry name" value="Anthranilate phosphoribosyltransferase"/>
    <property type="match status" value="1"/>
</dbReference>
<dbReference type="FunFam" id="3.40.1030.10:FF:000002">
    <property type="entry name" value="Anthranilate phosphoribosyltransferase"/>
    <property type="match status" value="1"/>
</dbReference>
<dbReference type="Gene3D" id="3.40.1030.10">
    <property type="entry name" value="Nucleoside phosphorylase/phosphoribosyltransferase catalytic domain"/>
    <property type="match status" value="1"/>
</dbReference>
<dbReference type="Gene3D" id="1.20.970.10">
    <property type="entry name" value="Transferase, Pyrimidine Nucleoside Phosphorylase, Chain C"/>
    <property type="match status" value="1"/>
</dbReference>
<dbReference type="HAMAP" id="MF_00211">
    <property type="entry name" value="TrpD"/>
    <property type="match status" value="1"/>
</dbReference>
<dbReference type="InterPro" id="IPR005940">
    <property type="entry name" value="Anthranilate_Pribosyl_Tfrase"/>
</dbReference>
<dbReference type="InterPro" id="IPR000312">
    <property type="entry name" value="Glycosyl_Trfase_fam3"/>
</dbReference>
<dbReference type="InterPro" id="IPR017459">
    <property type="entry name" value="Glycosyl_Trfase_fam3_N_dom"/>
</dbReference>
<dbReference type="InterPro" id="IPR036320">
    <property type="entry name" value="Glycosyl_Trfase_fam3_N_dom_sf"/>
</dbReference>
<dbReference type="InterPro" id="IPR035902">
    <property type="entry name" value="Nuc_phospho_transferase"/>
</dbReference>
<dbReference type="NCBIfam" id="TIGR01245">
    <property type="entry name" value="trpD"/>
    <property type="match status" value="1"/>
</dbReference>
<dbReference type="PANTHER" id="PTHR43285">
    <property type="entry name" value="ANTHRANILATE PHOSPHORIBOSYLTRANSFERASE"/>
    <property type="match status" value="1"/>
</dbReference>
<dbReference type="PANTHER" id="PTHR43285:SF2">
    <property type="entry name" value="ANTHRANILATE PHOSPHORIBOSYLTRANSFERASE"/>
    <property type="match status" value="1"/>
</dbReference>
<dbReference type="Pfam" id="PF02885">
    <property type="entry name" value="Glycos_trans_3N"/>
    <property type="match status" value="1"/>
</dbReference>
<dbReference type="Pfam" id="PF00591">
    <property type="entry name" value="Glycos_transf_3"/>
    <property type="match status" value="1"/>
</dbReference>
<dbReference type="SUPFAM" id="SSF52418">
    <property type="entry name" value="Nucleoside phosphorylase/phosphoribosyltransferase catalytic domain"/>
    <property type="match status" value="1"/>
</dbReference>
<dbReference type="SUPFAM" id="SSF47648">
    <property type="entry name" value="Nucleoside phosphorylase/phosphoribosyltransferase N-terminal domain"/>
    <property type="match status" value="1"/>
</dbReference>
<evidence type="ECO:0000255" key="1">
    <source>
        <dbReference type="HAMAP-Rule" id="MF_00211"/>
    </source>
</evidence>